<reference key="1">
    <citation type="submission" date="2007-03" db="EMBL/GenBank/DDBJ databases">
        <title>Sequencing analysis of Barbarea verna chloroplast DNA.</title>
        <authorList>
            <person name="Hosouchi T."/>
            <person name="Tsuruoka H."/>
            <person name="Kotani H."/>
        </authorList>
    </citation>
    <scope>NUCLEOTIDE SEQUENCE [LARGE SCALE GENOMIC DNA]</scope>
</reference>
<accession>A4QK95</accession>
<keyword id="KW-0150">Chloroplast</keyword>
<keyword id="KW-0240">DNA-directed RNA polymerase</keyword>
<keyword id="KW-0479">Metal-binding</keyword>
<keyword id="KW-0548">Nucleotidyltransferase</keyword>
<keyword id="KW-0934">Plastid</keyword>
<keyword id="KW-0804">Transcription</keyword>
<keyword id="KW-0808">Transferase</keyword>
<keyword id="KW-0862">Zinc</keyword>
<comment type="function">
    <text evidence="1">DNA-dependent RNA polymerase catalyzes the transcription of DNA into RNA using the four ribonucleoside triphosphates as substrates.</text>
</comment>
<comment type="catalytic activity">
    <reaction evidence="1">
        <text>RNA(n) + a ribonucleoside 5'-triphosphate = RNA(n+1) + diphosphate</text>
        <dbReference type="Rhea" id="RHEA:21248"/>
        <dbReference type="Rhea" id="RHEA-COMP:14527"/>
        <dbReference type="Rhea" id="RHEA-COMP:17342"/>
        <dbReference type="ChEBI" id="CHEBI:33019"/>
        <dbReference type="ChEBI" id="CHEBI:61557"/>
        <dbReference type="ChEBI" id="CHEBI:140395"/>
        <dbReference type="EC" id="2.7.7.6"/>
    </reaction>
</comment>
<comment type="cofactor">
    <cofactor evidence="1">
        <name>Zn(2+)</name>
        <dbReference type="ChEBI" id="CHEBI:29105"/>
    </cofactor>
    <text evidence="1">Binds 1 Zn(2+) ion per subunit.</text>
</comment>
<comment type="subunit">
    <text evidence="1">In plastids the minimal PEP RNA polymerase catalytic core is composed of four subunits: alpha, beta, beta', and beta''. When a (nuclear-encoded) sigma factor is associated with the core the holoenzyme is formed, which can initiate transcription.</text>
</comment>
<comment type="subcellular location">
    <subcellularLocation>
        <location evidence="1">Plastid</location>
        <location evidence="1">Chloroplast</location>
    </subcellularLocation>
</comment>
<comment type="similarity">
    <text evidence="1">Belongs to the RNA polymerase beta' chain family. RpoC2 subfamily.</text>
</comment>
<organism>
    <name type="scientific">Barbarea verna</name>
    <name type="common">Land cress</name>
    <name type="synonym">Erysimum vernum</name>
    <dbReference type="NCBI Taxonomy" id="50458"/>
    <lineage>
        <taxon>Eukaryota</taxon>
        <taxon>Viridiplantae</taxon>
        <taxon>Streptophyta</taxon>
        <taxon>Embryophyta</taxon>
        <taxon>Tracheophyta</taxon>
        <taxon>Spermatophyta</taxon>
        <taxon>Magnoliopsida</taxon>
        <taxon>eudicotyledons</taxon>
        <taxon>Gunneridae</taxon>
        <taxon>Pentapetalae</taxon>
        <taxon>rosids</taxon>
        <taxon>malvids</taxon>
        <taxon>Brassicales</taxon>
        <taxon>Brassicaceae</taxon>
        <taxon>Cardamineae</taxon>
        <taxon>Barbarea</taxon>
    </lineage>
</organism>
<geneLocation type="chloroplast"/>
<dbReference type="EC" id="2.7.7.6" evidence="1"/>
<dbReference type="EMBL" id="AP009370">
    <property type="protein sequence ID" value="BAF50100.1"/>
    <property type="molecule type" value="Genomic_DNA"/>
</dbReference>
<dbReference type="RefSeq" id="YP_001123276.1">
    <property type="nucleotide sequence ID" value="NC_009269.1"/>
</dbReference>
<dbReference type="SMR" id="A4QK95"/>
<dbReference type="GeneID" id="4961888"/>
<dbReference type="GO" id="GO:0009507">
    <property type="term" value="C:chloroplast"/>
    <property type="evidence" value="ECO:0007669"/>
    <property type="project" value="UniProtKB-SubCell"/>
</dbReference>
<dbReference type="GO" id="GO:0000428">
    <property type="term" value="C:DNA-directed RNA polymerase complex"/>
    <property type="evidence" value="ECO:0007669"/>
    <property type="project" value="UniProtKB-KW"/>
</dbReference>
<dbReference type="GO" id="GO:0005739">
    <property type="term" value="C:mitochondrion"/>
    <property type="evidence" value="ECO:0007669"/>
    <property type="project" value="GOC"/>
</dbReference>
<dbReference type="GO" id="GO:0003677">
    <property type="term" value="F:DNA binding"/>
    <property type="evidence" value="ECO:0007669"/>
    <property type="project" value="UniProtKB-UniRule"/>
</dbReference>
<dbReference type="GO" id="GO:0003899">
    <property type="term" value="F:DNA-directed RNA polymerase activity"/>
    <property type="evidence" value="ECO:0007669"/>
    <property type="project" value="UniProtKB-UniRule"/>
</dbReference>
<dbReference type="GO" id="GO:0008270">
    <property type="term" value="F:zinc ion binding"/>
    <property type="evidence" value="ECO:0007669"/>
    <property type="project" value="UniProtKB-UniRule"/>
</dbReference>
<dbReference type="GO" id="GO:0006351">
    <property type="term" value="P:DNA-templated transcription"/>
    <property type="evidence" value="ECO:0007669"/>
    <property type="project" value="UniProtKB-UniRule"/>
</dbReference>
<dbReference type="CDD" id="cd02655">
    <property type="entry name" value="RNAP_beta'_C"/>
    <property type="match status" value="1"/>
</dbReference>
<dbReference type="FunFam" id="1.10.132.30:FF:000002">
    <property type="entry name" value="DNA-directed RNA polymerase subunit beta"/>
    <property type="match status" value="1"/>
</dbReference>
<dbReference type="FunFam" id="1.10.1790.20:FF:000002">
    <property type="entry name" value="DNA-directed RNA polymerase subunit beta"/>
    <property type="match status" value="1"/>
</dbReference>
<dbReference type="FunFam" id="1.10.274.100:FF:000011">
    <property type="entry name" value="DNA-directed RNA polymerase subunit beta"/>
    <property type="match status" value="1"/>
</dbReference>
<dbReference type="Gene3D" id="1.10.132.30">
    <property type="match status" value="1"/>
</dbReference>
<dbReference type="Gene3D" id="1.10.150.390">
    <property type="match status" value="1"/>
</dbReference>
<dbReference type="Gene3D" id="1.10.1790.20">
    <property type="match status" value="1"/>
</dbReference>
<dbReference type="Gene3D" id="1.10.274.100">
    <property type="entry name" value="RNA polymerase Rpb1, domain 3"/>
    <property type="match status" value="1"/>
</dbReference>
<dbReference type="HAMAP" id="MF_01324">
    <property type="entry name" value="RNApol_bact_RpoC2"/>
    <property type="match status" value="1"/>
</dbReference>
<dbReference type="InterPro" id="IPR012756">
    <property type="entry name" value="DNA-dir_RpoC2_beta_pp"/>
</dbReference>
<dbReference type="InterPro" id="IPR050254">
    <property type="entry name" value="RNA_pol_beta''_euk"/>
</dbReference>
<dbReference type="InterPro" id="IPR042102">
    <property type="entry name" value="RNA_pol_Rpb1_3_sf"/>
</dbReference>
<dbReference type="InterPro" id="IPR007083">
    <property type="entry name" value="RNA_pol_Rpb1_4"/>
</dbReference>
<dbReference type="InterPro" id="IPR007081">
    <property type="entry name" value="RNA_pol_Rpb1_5"/>
</dbReference>
<dbReference type="InterPro" id="IPR038120">
    <property type="entry name" value="Rpb1_funnel_sf"/>
</dbReference>
<dbReference type="NCBIfam" id="TIGR02388">
    <property type="entry name" value="rpoC2_cyan"/>
    <property type="match status" value="1"/>
</dbReference>
<dbReference type="PANTHER" id="PTHR34995">
    <property type="entry name" value="DNA-DIRECTED RNA POLYMERASE SUBUNIT BETA"/>
    <property type="match status" value="1"/>
</dbReference>
<dbReference type="PANTHER" id="PTHR34995:SF1">
    <property type="entry name" value="DNA-DIRECTED RNA POLYMERASE SUBUNIT BETA"/>
    <property type="match status" value="1"/>
</dbReference>
<dbReference type="Pfam" id="PF05000">
    <property type="entry name" value="RNA_pol_Rpb1_4"/>
    <property type="match status" value="1"/>
</dbReference>
<dbReference type="Pfam" id="PF04998">
    <property type="entry name" value="RNA_pol_Rpb1_5"/>
    <property type="match status" value="2"/>
</dbReference>
<dbReference type="SUPFAM" id="SSF64484">
    <property type="entry name" value="beta and beta-prime subunits of DNA dependent RNA-polymerase"/>
    <property type="match status" value="1"/>
</dbReference>
<feature type="chain" id="PRO_0000353547" description="DNA-directed RNA polymerase subunit beta''">
    <location>
        <begin position="1"/>
        <end position="1379"/>
    </location>
</feature>
<feature type="binding site" evidence="1">
    <location>
        <position position="220"/>
    </location>
    <ligand>
        <name>Zn(2+)</name>
        <dbReference type="ChEBI" id="CHEBI:29105"/>
    </ligand>
</feature>
<feature type="binding site" evidence="1">
    <location>
        <position position="293"/>
    </location>
    <ligand>
        <name>Zn(2+)</name>
        <dbReference type="ChEBI" id="CHEBI:29105"/>
    </ligand>
</feature>
<feature type="binding site" evidence="1">
    <location>
        <position position="300"/>
    </location>
    <ligand>
        <name>Zn(2+)</name>
        <dbReference type="ChEBI" id="CHEBI:29105"/>
    </ligand>
</feature>
<feature type="binding site" evidence="1">
    <location>
        <position position="303"/>
    </location>
    <ligand>
        <name>Zn(2+)</name>
        <dbReference type="ChEBI" id="CHEBI:29105"/>
    </ligand>
</feature>
<gene>
    <name evidence="1" type="primary">rpoC2</name>
</gene>
<name>RPOC2_BARVE</name>
<protein>
    <recommendedName>
        <fullName evidence="1">DNA-directed RNA polymerase subunit beta''</fullName>
        <ecNumber evidence="1">2.7.7.6</ecNumber>
    </recommendedName>
    <alternativeName>
        <fullName evidence="1">PEP</fullName>
    </alternativeName>
    <alternativeName>
        <fullName evidence="1">Plastid-encoded RNA polymerase subunit beta''</fullName>
        <shortName evidence="1">RNA polymerase subunit beta''</shortName>
    </alternativeName>
</protein>
<sequence>MAERANLVFHNKVIDGTAIKRLISRLIDHFGMAYTSHILDQVKTLGFQQATATSISLGIDDLLTIPSKGWLVQDAEQQSLILEKHHHYGNVHAVEKLRQSIEIWYATSEYLRQEMNPNFRMTDPLNPVHMMSFSGARGNASQVHQLVGMRGLMSDPQGQMIDLPIQSNLREGLSLTEYIISCYGARKGVVDTAVRTSDAGYLTRRLVEVVQHIVVRRTDCGTIRGISVSPRNKNRMMSERIFIQTLIGRVLADDIYIGSRCVAFRNQDLGIGLVNRLITFGTQSISIRTPFTCRSTSWICRLCYGRSPTHGDLVELGEAVGIIAGQSIGEPGTQLTLRTFHTGGVFTGGTAEHVRAPYNGKIKFNEDLVHPTRTRHGHPAFLCYIDLSVIIESEDIIHSVTIPPKSFLLVQNDQYVESEQVIAEIREGTHTFHFKERVRKYIYSDSEGEMHWSTDVSHAPEFTYSNVHLLPKTSHLWILSGGSCGSSLILFSIHKDQDQMNIPFLSVERKSISSLSVNNDQVSQNFLSSDFADKKKSGIPHYSELNGNLGTSHYNFIYSAIFHENSDLLAKRRRNRFLIPFQSIQEQEKEFIPHSGISIEIPINGIFRRNSIFAFFDDPRYRRKSSGILKYGTLKADSIIQKEDMIEYRGVQKFKTKYEMKVDRFFFIPEEVHILPESSAIMVQNYSIIGVDTRITLNLRSRVGGLIRVERKKKRIELKIFSGDIHFPDKTDKISRHSGILIPPGRGKTNSKESKKLKNWIYVQRITPTKKKFFVLVRPVATYEIADSINLATLFPQDLFQEKDNIQLRVFNYILYGNGKPTRGISDTSIQLVRTCLVLNWDQENKNSSVEEVRAFFVEVSTKGLIRDFIRIGLVKSHMSYIRKRNNTPDSGLISADNMNPVYSISPKVGIFQQSLRQNHGTIRMFLNRNKESQSLLILSASNCFRIGPFNHVKYHNVINQSIKKNPLITIKNSPGPLGTSIQISNFFSFLPLLTYNLISVIKYLQLDNLKYIFQVINSYLIDENGRIFNLDPYNNVVLNPFKLNWYFLHKNYHHNYCEETSTIISLGQFFCENVCIAKNEPHLKSGQVLIVQRDSVVIRSAKPYLATPGAKVHGHYREILYEGDTLVTFIYEKSRSGDITQGLPKVEQVLEVRAIDSISLNLEKRIKGWNKCITRILGIPWGFLIGAELTIVQSRISLVNKIQKVYRSQGVQIHNRHIEIIVRQITSKVLVSEEGMSNVFLPGELIGLLRAERTGRALEEAICYRAVLLGITRASLNTQSFISEASFQETSRVLAKAALRGRIDWLKGLKENVVLGGVIPAGTGFNKGLVHCSRQYTNILLEKKKKNLSLFEGDMRDILFYHREFCDSSISKSDFSRI</sequence>
<evidence type="ECO:0000255" key="1">
    <source>
        <dbReference type="HAMAP-Rule" id="MF_01324"/>
    </source>
</evidence>
<proteinExistence type="inferred from homology"/>